<reference key="1">
    <citation type="journal article" date="1998" name="Nature">
        <title>The complete genome of the hyperthermophilic bacterium Aquifex aeolicus.</title>
        <authorList>
            <person name="Deckert G."/>
            <person name="Warren P.V."/>
            <person name="Gaasterland T."/>
            <person name="Young W.G."/>
            <person name="Lenox A.L."/>
            <person name="Graham D.E."/>
            <person name="Overbeek R."/>
            <person name="Snead M.A."/>
            <person name="Keller M."/>
            <person name="Aujay M."/>
            <person name="Huber R."/>
            <person name="Feldman R.A."/>
            <person name="Short J.M."/>
            <person name="Olsen G.J."/>
            <person name="Swanson R.V."/>
        </authorList>
    </citation>
    <scope>NUCLEOTIDE SEQUENCE [LARGE SCALE GENOMIC DNA]</scope>
    <source>
        <strain>VF5</strain>
    </source>
</reference>
<organism>
    <name type="scientific">Aquifex aeolicus (strain VF5)</name>
    <dbReference type="NCBI Taxonomy" id="224324"/>
    <lineage>
        <taxon>Bacteria</taxon>
        <taxon>Pseudomonadati</taxon>
        <taxon>Aquificota</taxon>
        <taxon>Aquificia</taxon>
        <taxon>Aquificales</taxon>
        <taxon>Aquificaceae</taxon>
        <taxon>Aquifex</taxon>
    </lineage>
</organism>
<evidence type="ECO:0000255" key="1">
    <source>
        <dbReference type="HAMAP-Rule" id="MF_00443"/>
    </source>
</evidence>
<accession>O67926</accession>
<proteinExistence type="inferred from homology"/>
<keyword id="KW-0963">Cytoplasm</keyword>
<keyword id="KW-1185">Reference proteome</keyword>
<keyword id="KW-0704">Schiff base</keyword>
<keyword id="KW-0784">Thiamine biosynthesis</keyword>
<keyword id="KW-0808">Transferase</keyword>
<comment type="function">
    <text evidence="1">Catalyzes the rearrangement of 1-deoxy-D-xylulose 5-phosphate (DXP) to produce the thiazole phosphate moiety of thiamine. Sulfur is provided by the thiocarboxylate moiety of the carrier protein ThiS. In vitro, sulfur can be provided by H(2)S.</text>
</comment>
<comment type="catalytic activity">
    <reaction evidence="1">
        <text>[ThiS sulfur-carrier protein]-C-terminal-Gly-aminoethanethioate + 2-iminoacetate + 1-deoxy-D-xylulose 5-phosphate = [ThiS sulfur-carrier protein]-C-terminal Gly-Gly + 2-[(2R,5Z)-2-carboxy-4-methylthiazol-5(2H)-ylidene]ethyl phosphate + 2 H2O + H(+)</text>
        <dbReference type="Rhea" id="RHEA:26297"/>
        <dbReference type="Rhea" id="RHEA-COMP:12909"/>
        <dbReference type="Rhea" id="RHEA-COMP:19908"/>
        <dbReference type="ChEBI" id="CHEBI:15377"/>
        <dbReference type="ChEBI" id="CHEBI:15378"/>
        <dbReference type="ChEBI" id="CHEBI:57792"/>
        <dbReference type="ChEBI" id="CHEBI:62899"/>
        <dbReference type="ChEBI" id="CHEBI:77846"/>
        <dbReference type="ChEBI" id="CHEBI:90778"/>
        <dbReference type="ChEBI" id="CHEBI:232372"/>
        <dbReference type="EC" id="2.8.1.10"/>
    </reaction>
</comment>
<comment type="pathway">
    <text evidence="1">Cofactor biosynthesis; thiamine diphosphate biosynthesis.</text>
</comment>
<comment type="subunit">
    <text evidence="1">Homotetramer. Forms heterodimers with either ThiH or ThiS.</text>
</comment>
<comment type="subcellular location">
    <subcellularLocation>
        <location evidence="1">Cytoplasm</location>
    </subcellularLocation>
</comment>
<comment type="similarity">
    <text evidence="1">Belongs to the ThiG family.</text>
</comment>
<feature type="chain" id="PRO_0000162777" description="Thiazole synthase">
    <location>
        <begin position="1"/>
        <end position="267"/>
    </location>
</feature>
<feature type="active site" description="Schiff-base intermediate with DXP" evidence="1">
    <location>
        <position position="107"/>
    </location>
</feature>
<feature type="binding site" evidence="1">
    <location>
        <position position="168"/>
    </location>
    <ligand>
        <name>1-deoxy-D-xylulose 5-phosphate</name>
        <dbReference type="ChEBI" id="CHEBI:57792"/>
    </ligand>
</feature>
<feature type="binding site" evidence="1">
    <location>
        <begin position="194"/>
        <end position="195"/>
    </location>
    <ligand>
        <name>1-deoxy-D-xylulose 5-phosphate</name>
        <dbReference type="ChEBI" id="CHEBI:57792"/>
    </ligand>
</feature>
<feature type="binding site" evidence="1">
    <location>
        <begin position="216"/>
        <end position="217"/>
    </location>
    <ligand>
        <name>1-deoxy-D-xylulose 5-phosphate</name>
        <dbReference type="ChEBI" id="CHEBI:57792"/>
    </ligand>
</feature>
<name>THIG_AQUAE</name>
<protein>
    <recommendedName>
        <fullName evidence="1">Thiazole synthase</fullName>
        <ecNumber evidence="1">2.8.1.10</ecNumber>
    </recommendedName>
</protein>
<dbReference type="EC" id="2.8.1.10" evidence="1"/>
<dbReference type="EMBL" id="AE000657">
    <property type="protein sequence ID" value="AAC07879.1"/>
    <property type="molecule type" value="Genomic_DNA"/>
</dbReference>
<dbReference type="PIR" id="B70487">
    <property type="entry name" value="B70487"/>
</dbReference>
<dbReference type="RefSeq" id="NP_214495.1">
    <property type="nucleotide sequence ID" value="NC_000918.1"/>
</dbReference>
<dbReference type="RefSeq" id="WP_010881431.1">
    <property type="nucleotide sequence ID" value="NC_000918.1"/>
</dbReference>
<dbReference type="SMR" id="O67926"/>
<dbReference type="FunCoup" id="O67926">
    <property type="interactions" value="284"/>
</dbReference>
<dbReference type="STRING" id="224324.aq_2178"/>
<dbReference type="EnsemblBacteria" id="AAC07879">
    <property type="protein sequence ID" value="AAC07879"/>
    <property type="gene ID" value="aq_2178"/>
</dbReference>
<dbReference type="KEGG" id="aae:aq_2178"/>
<dbReference type="PATRIC" id="fig|224324.8.peg.1684"/>
<dbReference type="eggNOG" id="COG2022">
    <property type="taxonomic scope" value="Bacteria"/>
</dbReference>
<dbReference type="HOGENOM" id="CLU_062233_1_0_0"/>
<dbReference type="InParanoid" id="O67926"/>
<dbReference type="OrthoDB" id="9805935at2"/>
<dbReference type="UniPathway" id="UPA00060"/>
<dbReference type="Proteomes" id="UP000000798">
    <property type="component" value="Chromosome"/>
</dbReference>
<dbReference type="GO" id="GO:1902508">
    <property type="term" value="C:2-iminoacetate synthase complex"/>
    <property type="evidence" value="ECO:0000318"/>
    <property type="project" value="GO_Central"/>
</dbReference>
<dbReference type="GO" id="GO:0005737">
    <property type="term" value="C:cytoplasm"/>
    <property type="evidence" value="ECO:0007669"/>
    <property type="project" value="UniProtKB-SubCell"/>
</dbReference>
<dbReference type="GO" id="GO:1990107">
    <property type="term" value="F:thiazole synthase activity"/>
    <property type="evidence" value="ECO:0007669"/>
    <property type="project" value="UniProtKB-EC"/>
</dbReference>
<dbReference type="GO" id="GO:0009228">
    <property type="term" value="P:thiamine biosynthetic process"/>
    <property type="evidence" value="ECO:0000318"/>
    <property type="project" value="GO_Central"/>
</dbReference>
<dbReference type="GO" id="GO:0009229">
    <property type="term" value="P:thiamine diphosphate biosynthetic process"/>
    <property type="evidence" value="ECO:0000318"/>
    <property type="project" value="GO_Central"/>
</dbReference>
<dbReference type="CDD" id="cd04728">
    <property type="entry name" value="ThiG"/>
    <property type="match status" value="1"/>
</dbReference>
<dbReference type="Gene3D" id="3.20.20.70">
    <property type="entry name" value="Aldolase class I"/>
    <property type="match status" value="1"/>
</dbReference>
<dbReference type="HAMAP" id="MF_00443">
    <property type="entry name" value="ThiG"/>
    <property type="match status" value="1"/>
</dbReference>
<dbReference type="InterPro" id="IPR013785">
    <property type="entry name" value="Aldolase_TIM"/>
</dbReference>
<dbReference type="InterPro" id="IPR033983">
    <property type="entry name" value="Thiazole_synthase_ThiG"/>
</dbReference>
<dbReference type="InterPro" id="IPR008867">
    <property type="entry name" value="ThiG"/>
</dbReference>
<dbReference type="PANTHER" id="PTHR34266">
    <property type="entry name" value="THIAZOLE SYNTHASE"/>
    <property type="match status" value="1"/>
</dbReference>
<dbReference type="PANTHER" id="PTHR34266:SF2">
    <property type="entry name" value="THIAZOLE SYNTHASE"/>
    <property type="match status" value="1"/>
</dbReference>
<dbReference type="Pfam" id="PF05690">
    <property type="entry name" value="ThiG"/>
    <property type="match status" value="1"/>
</dbReference>
<dbReference type="SUPFAM" id="SSF110399">
    <property type="entry name" value="ThiG-like"/>
    <property type="match status" value="1"/>
</dbReference>
<sequence length="267" mass="29062">MQDWEKLLQDDYLEIAGRKFKSRLIIGSGKFKDFQQTKEVLEASGAEIITVAVRRVNITDPTKENLLDYIDPKKYLILPNTAGCYTAEEAIKTAMMAREATGINWVKLEVIGDQKTLLPDMEETYKAAKVLVKEGFVVLPYIFDDPVFAKKFEDIGCAAVMPLAAPIGSGLGLQNPYNLIFIKEAVSVPVIVDAGIGSATDIPPVMELGVDGVLTNTALAEAKDPIKMAVAMKYATIAGRLAYLAGRMPKRTYAVPSSPTKGVPFKG</sequence>
<gene>
    <name evidence="1" type="primary">thiG</name>
    <name type="ordered locus">aq_2178</name>
</gene>